<comment type="function">
    <text evidence="1">Catalyzes the reversible transfer of the terminal phosphate group between ATP and AMP. Plays an important role in cellular energy homeostasis and in adenine nucleotide metabolism. Adenylate kinase activity is critical for regulation of the phosphate utilization and the AMP de novo biosynthesis pathways.</text>
</comment>
<comment type="catalytic activity">
    <reaction evidence="1">
        <text>AMP + ATP = 2 ADP</text>
        <dbReference type="Rhea" id="RHEA:12973"/>
        <dbReference type="ChEBI" id="CHEBI:30616"/>
        <dbReference type="ChEBI" id="CHEBI:456215"/>
        <dbReference type="ChEBI" id="CHEBI:456216"/>
        <dbReference type="EC" id="2.7.4.3"/>
    </reaction>
</comment>
<comment type="subunit">
    <text evidence="1">Monomer.</text>
</comment>
<comment type="subcellular location">
    <subcellularLocation>
        <location evidence="1">Cytoplasm</location>
        <location evidence="1">Cytosol</location>
    </subcellularLocation>
    <subcellularLocation>
        <location evidence="1">Mitochondrion intermembrane space</location>
    </subcellularLocation>
    <text evidence="1">Predominantly mitochondrial.</text>
</comment>
<comment type="domain">
    <text evidence="1">Consists of three domains, a large central CORE domain and two small peripheral domains, NMPbind and LID, which undergo movements during catalysis. The LID domain closes over the site of phosphoryl transfer upon ATP binding. Assembling and dissambling the active center during each catalytic cycle provides an effective means to prevent ATP hydrolysis.</text>
</comment>
<comment type="similarity">
    <text evidence="1">Belongs to the adenylate kinase family. AK2 subfamily.</text>
</comment>
<protein>
    <recommendedName>
        <fullName evidence="1">Adenylate kinase</fullName>
        <ecNumber evidence="1">2.7.4.3</ecNumber>
    </recommendedName>
    <alternativeName>
        <fullName evidence="1">ATP-AMP transphosphorylase</fullName>
    </alternativeName>
    <alternativeName>
        <fullName evidence="1">ATP:AMP phosphotransferase</fullName>
    </alternativeName>
    <alternativeName>
        <fullName evidence="1">Adenylate kinase cytosolic and mitochondrial</fullName>
    </alternativeName>
    <alternativeName>
        <fullName evidence="1">Adenylate monophosphate kinase</fullName>
    </alternativeName>
    <alternativeName>
        <fullName>Lethal protein 754</fullName>
    </alternativeName>
</protein>
<evidence type="ECO:0000255" key="1">
    <source>
        <dbReference type="HAMAP-Rule" id="MF_03168"/>
    </source>
</evidence>
<evidence type="ECO:0000256" key="2">
    <source>
        <dbReference type="SAM" id="MobiDB-lite"/>
    </source>
</evidence>
<feature type="chain" id="PRO_0000158933" description="Adenylate kinase">
    <location>
        <begin position="1"/>
        <end position="251"/>
    </location>
</feature>
<feature type="region of interest" description="Disordered" evidence="2">
    <location>
        <begin position="1"/>
        <end position="20"/>
    </location>
</feature>
<feature type="region of interest" description="NMP" evidence="1">
    <location>
        <begin position="56"/>
        <end position="85"/>
    </location>
</feature>
<feature type="region of interest" description="LID" evidence="1">
    <location>
        <begin position="152"/>
        <end position="189"/>
    </location>
</feature>
<feature type="compositionally biased region" description="Low complexity" evidence="2">
    <location>
        <begin position="1"/>
        <end position="17"/>
    </location>
</feature>
<feature type="binding site" evidence="1">
    <location>
        <begin position="36"/>
        <end position="41"/>
    </location>
    <ligand>
        <name>ATP</name>
        <dbReference type="ChEBI" id="CHEBI:30616"/>
    </ligand>
</feature>
<feature type="binding site" evidence="1">
    <location>
        <position position="57"/>
    </location>
    <ligand>
        <name>AMP</name>
        <dbReference type="ChEBI" id="CHEBI:456215"/>
    </ligand>
</feature>
<feature type="binding site" evidence="1">
    <location>
        <position position="62"/>
    </location>
    <ligand>
        <name>AMP</name>
        <dbReference type="ChEBI" id="CHEBI:456215"/>
    </ligand>
</feature>
<feature type="binding site" evidence="1">
    <location>
        <begin position="83"/>
        <end position="85"/>
    </location>
    <ligand>
        <name>AMP</name>
        <dbReference type="ChEBI" id="CHEBI:456215"/>
    </ligand>
</feature>
<feature type="binding site" evidence="1">
    <location>
        <begin position="111"/>
        <end position="114"/>
    </location>
    <ligand>
        <name>AMP</name>
        <dbReference type="ChEBI" id="CHEBI:456215"/>
    </ligand>
</feature>
<feature type="binding site" evidence="1">
    <location>
        <position position="118"/>
    </location>
    <ligand>
        <name>AMP</name>
        <dbReference type="ChEBI" id="CHEBI:456215"/>
    </ligand>
</feature>
<feature type="binding site" evidence="1">
    <location>
        <position position="153"/>
    </location>
    <ligand>
        <name>ATP</name>
        <dbReference type="ChEBI" id="CHEBI:30616"/>
    </ligand>
</feature>
<feature type="binding site" evidence="1">
    <location>
        <begin position="162"/>
        <end position="163"/>
    </location>
    <ligand>
        <name>ATP</name>
        <dbReference type="ChEBI" id="CHEBI:30616"/>
    </ligand>
</feature>
<feature type="binding site" evidence="1">
    <location>
        <position position="186"/>
    </location>
    <ligand>
        <name>AMP</name>
        <dbReference type="ChEBI" id="CHEBI:456215"/>
    </ligand>
</feature>
<feature type="binding site" evidence="1">
    <location>
        <position position="197"/>
    </location>
    <ligand>
        <name>AMP</name>
        <dbReference type="ChEBI" id="CHEBI:456215"/>
    </ligand>
</feature>
<feature type="binding site" evidence="1">
    <location>
        <position position="225"/>
    </location>
    <ligand>
        <name>ATP</name>
        <dbReference type="ChEBI" id="CHEBI:30616"/>
    </ligand>
</feature>
<dbReference type="EC" id="2.7.4.3" evidence="1"/>
<dbReference type="EMBL" id="FO080706">
    <property type="protein sequence ID" value="CCD66007.1"/>
    <property type="molecule type" value="Genomic_DNA"/>
</dbReference>
<dbReference type="PIR" id="S44766">
    <property type="entry name" value="S44766"/>
</dbReference>
<dbReference type="RefSeq" id="NP_001370509.1">
    <property type="nucleotide sequence ID" value="NM_001382927.2"/>
</dbReference>
<dbReference type="RefSeq" id="NP_498730.1">
    <property type="nucleotide sequence ID" value="NM_066329.5"/>
</dbReference>
<dbReference type="SMR" id="P34346"/>
<dbReference type="BioGRID" id="41325">
    <property type="interactions" value="19"/>
</dbReference>
<dbReference type="FunCoup" id="P34346">
    <property type="interactions" value="2137"/>
</dbReference>
<dbReference type="STRING" id="6239.C29E4.8.2"/>
<dbReference type="PaxDb" id="6239-C29E4.8.1"/>
<dbReference type="PeptideAtlas" id="P34346"/>
<dbReference type="EnsemblMetazoa" id="C29E4.8.1">
    <property type="protein sequence ID" value="C29E4.8.1"/>
    <property type="gene ID" value="WBGene00002879"/>
</dbReference>
<dbReference type="EnsemblMetazoa" id="C29E4.8.2">
    <property type="protein sequence ID" value="C29E4.8.2"/>
    <property type="gene ID" value="WBGene00002879"/>
</dbReference>
<dbReference type="EnsemblMetazoa" id="C29E4.8.3">
    <property type="protein sequence ID" value="C29E4.8.3"/>
    <property type="gene ID" value="WBGene00002879"/>
</dbReference>
<dbReference type="GeneID" id="176118"/>
<dbReference type="AGR" id="WB:WBGene00002879"/>
<dbReference type="WormBase" id="C29E4.8">
    <property type="protein sequence ID" value="CE29198"/>
    <property type="gene ID" value="WBGene00002879"/>
    <property type="gene designation" value="let-754"/>
</dbReference>
<dbReference type="eggNOG" id="KOG3078">
    <property type="taxonomic scope" value="Eukaryota"/>
</dbReference>
<dbReference type="GeneTree" id="ENSGT00940000154576"/>
<dbReference type="HOGENOM" id="CLU_032354_1_0_1"/>
<dbReference type="InParanoid" id="P34346"/>
<dbReference type="OMA" id="VYHEQTA"/>
<dbReference type="OrthoDB" id="439792at2759"/>
<dbReference type="PhylomeDB" id="P34346"/>
<dbReference type="Reactome" id="R-CEL-499943">
    <property type="pathway name" value="Interconversion of nucleotide di- and triphosphates"/>
</dbReference>
<dbReference type="PRO" id="PR:P34346"/>
<dbReference type="Proteomes" id="UP000001940">
    <property type="component" value="Chromosome III"/>
</dbReference>
<dbReference type="Bgee" id="WBGene00002879">
    <property type="expression patterns" value="Expressed in germ line (C elegans) and 4 other cell types or tissues"/>
</dbReference>
<dbReference type="GO" id="GO:0005737">
    <property type="term" value="C:cytoplasm"/>
    <property type="evidence" value="ECO:0000318"/>
    <property type="project" value="GO_Central"/>
</dbReference>
<dbReference type="GO" id="GO:0005829">
    <property type="term" value="C:cytosol"/>
    <property type="evidence" value="ECO:0007669"/>
    <property type="project" value="UniProtKB-SubCell"/>
</dbReference>
<dbReference type="GO" id="GO:0005758">
    <property type="term" value="C:mitochondrial intermembrane space"/>
    <property type="evidence" value="ECO:0007669"/>
    <property type="project" value="UniProtKB-SubCell"/>
</dbReference>
<dbReference type="GO" id="GO:0005739">
    <property type="term" value="C:mitochondrion"/>
    <property type="evidence" value="ECO:0000318"/>
    <property type="project" value="GO_Central"/>
</dbReference>
<dbReference type="GO" id="GO:0004017">
    <property type="term" value="F:adenylate kinase activity"/>
    <property type="evidence" value="ECO:0000318"/>
    <property type="project" value="GO_Central"/>
</dbReference>
<dbReference type="GO" id="GO:0005524">
    <property type="term" value="F:ATP binding"/>
    <property type="evidence" value="ECO:0007669"/>
    <property type="project" value="UniProtKB-KW"/>
</dbReference>
<dbReference type="GO" id="GO:0006172">
    <property type="term" value="P:ADP biosynthetic process"/>
    <property type="evidence" value="ECO:0000318"/>
    <property type="project" value="GO_Central"/>
</dbReference>
<dbReference type="GO" id="GO:0046033">
    <property type="term" value="P:AMP metabolic process"/>
    <property type="evidence" value="ECO:0007669"/>
    <property type="project" value="UniProtKB-UniRule"/>
</dbReference>
<dbReference type="GO" id="GO:0046034">
    <property type="term" value="P:ATP metabolic process"/>
    <property type="evidence" value="ECO:0007669"/>
    <property type="project" value="UniProtKB-UniRule"/>
</dbReference>
<dbReference type="GO" id="GO:2000114">
    <property type="term" value="P:regulation of establishment of cell polarity"/>
    <property type="evidence" value="ECO:0000316"/>
    <property type="project" value="WormBase"/>
</dbReference>
<dbReference type="CDD" id="cd01428">
    <property type="entry name" value="ADK"/>
    <property type="match status" value="1"/>
</dbReference>
<dbReference type="FunFam" id="3.40.50.300:FF:000106">
    <property type="entry name" value="Adenylate kinase mitochondrial"/>
    <property type="match status" value="1"/>
</dbReference>
<dbReference type="Gene3D" id="3.40.50.300">
    <property type="entry name" value="P-loop containing nucleotide triphosphate hydrolases"/>
    <property type="match status" value="1"/>
</dbReference>
<dbReference type="HAMAP" id="MF_00235">
    <property type="entry name" value="Adenylate_kinase_Adk"/>
    <property type="match status" value="1"/>
</dbReference>
<dbReference type="HAMAP" id="MF_03168">
    <property type="entry name" value="Adenylate_kinase_AK2"/>
    <property type="match status" value="1"/>
</dbReference>
<dbReference type="InterPro" id="IPR006259">
    <property type="entry name" value="Adenyl_kin_sub"/>
</dbReference>
<dbReference type="InterPro" id="IPR000850">
    <property type="entry name" value="Adenylat/UMP-CMP_kin"/>
</dbReference>
<dbReference type="InterPro" id="IPR033690">
    <property type="entry name" value="Adenylat_kinase_CS"/>
</dbReference>
<dbReference type="InterPro" id="IPR007862">
    <property type="entry name" value="Adenylate_kinase_lid-dom"/>
</dbReference>
<dbReference type="InterPro" id="IPR028587">
    <property type="entry name" value="AK2"/>
</dbReference>
<dbReference type="InterPro" id="IPR027417">
    <property type="entry name" value="P-loop_NTPase"/>
</dbReference>
<dbReference type="NCBIfam" id="TIGR01351">
    <property type="entry name" value="adk"/>
    <property type="match status" value="1"/>
</dbReference>
<dbReference type="NCBIfam" id="NF001381">
    <property type="entry name" value="PRK00279.1-3"/>
    <property type="match status" value="1"/>
</dbReference>
<dbReference type="NCBIfam" id="NF011100">
    <property type="entry name" value="PRK14527.1"/>
    <property type="match status" value="1"/>
</dbReference>
<dbReference type="PANTHER" id="PTHR23359">
    <property type="entry name" value="NUCLEOTIDE KINASE"/>
    <property type="match status" value="1"/>
</dbReference>
<dbReference type="Pfam" id="PF00406">
    <property type="entry name" value="ADK"/>
    <property type="match status" value="1"/>
</dbReference>
<dbReference type="Pfam" id="PF05191">
    <property type="entry name" value="ADK_lid"/>
    <property type="match status" value="1"/>
</dbReference>
<dbReference type="PRINTS" id="PR00094">
    <property type="entry name" value="ADENYLTKNASE"/>
</dbReference>
<dbReference type="SUPFAM" id="SSF52540">
    <property type="entry name" value="P-loop containing nucleoside triphosphate hydrolases"/>
    <property type="match status" value="1"/>
</dbReference>
<dbReference type="PROSITE" id="PS00113">
    <property type="entry name" value="ADENYLATE_KINASE"/>
    <property type="match status" value="1"/>
</dbReference>
<sequence length="251" mass="27925">MGVPKTQQSAQPATQSAGPTETLARGIRAIFIGPPGSGKGTQAPAFAQKYFSCHLATGDLLRAEVASGSEFGKELKATMDAGKLVSDEVVCKLIEQKLEKPECKYGFILDGFPRTSGQAEKLDEILERRKTPLDTVVEFNIADDLLVRRITGRLFHIASGRSYHLEFKPPKVPMKDDLTGEPLIRRSDDNEETLRKRLVQYHQMTVPLVDYYKKHGVHVAVDAAKPMTDVKAHIDQVFAKFTQKKERVSFV</sequence>
<name>KAD2_CAEEL</name>
<organism>
    <name type="scientific">Caenorhabditis elegans</name>
    <dbReference type="NCBI Taxonomy" id="6239"/>
    <lineage>
        <taxon>Eukaryota</taxon>
        <taxon>Metazoa</taxon>
        <taxon>Ecdysozoa</taxon>
        <taxon>Nematoda</taxon>
        <taxon>Chromadorea</taxon>
        <taxon>Rhabditida</taxon>
        <taxon>Rhabditina</taxon>
        <taxon>Rhabditomorpha</taxon>
        <taxon>Rhabditoidea</taxon>
        <taxon>Rhabditidae</taxon>
        <taxon>Peloderinae</taxon>
        <taxon>Caenorhabditis</taxon>
    </lineage>
</organism>
<keyword id="KW-0067">ATP-binding</keyword>
<keyword id="KW-0963">Cytoplasm</keyword>
<keyword id="KW-0418">Kinase</keyword>
<keyword id="KW-0496">Mitochondrion</keyword>
<keyword id="KW-0547">Nucleotide-binding</keyword>
<keyword id="KW-1185">Reference proteome</keyword>
<keyword id="KW-0808">Transferase</keyword>
<accession>P34346</accession>
<reference key="1">
    <citation type="journal article" date="1994" name="Nature">
        <title>2.2 Mb of contiguous nucleotide sequence from chromosome III of C. elegans.</title>
        <authorList>
            <person name="Wilson R."/>
            <person name="Ainscough R."/>
            <person name="Anderson K."/>
            <person name="Baynes C."/>
            <person name="Berks M."/>
            <person name="Bonfield J."/>
            <person name="Burton J."/>
            <person name="Connell M."/>
            <person name="Copsey T."/>
            <person name="Cooper J."/>
            <person name="Coulson A."/>
            <person name="Craxton M."/>
            <person name="Dear S."/>
            <person name="Du Z."/>
            <person name="Durbin R."/>
            <person name="Favello A."/>
            <person name="Fraser A."/>
            <person name="Fulton L."/>
            <person name="Gardner A."/>
            <person name="Green P."/>
            <person name="Hawkins T."/>
            <person name="Hillier L."/>
            <person name="Jier M."/>
            <person name="Johnston L."/>
            <person name="Jones M."/>
            <person name="Kershaw J."/>
            <person name="Kirsten J."/>
            <person name="Laisster N."/>
            <person name="Latreille P."/>
            <person name="Lightning J."/>
            <person name="Lloyd C."/>
            <person name="Mortimore B."/>
            <person name="O'Callaghan M."/>
            <person name="Parsons J."/>
            <person name="Percy C."/>
            <person name="Rifken L."/>
            <person name="Roopra A."/>
            <person name="Saunders D."/>
            <person name="Shownkeen R."/>
            <person name="Sims M."/>
            <person name="Smaldon N."/>
            <person name="Smith A."/>
            <person name="Smith M."/>
            <person name="Sonnhammer E."/>
            <person name="Staden R."/>
            <person name="Sulston J."/>
            <person name="Thierry-Mieg J."/>
            <person name="Thomas K."/>
            <person name="Vaudin M."/>
            <person name="Vaughan K."/>
            <person name="Waterston R."/>
            <person name="Watson A."/>
            <person name="Weinstock L."/>
            <person name="Wilkinson-Sproat J."/>
            <person name="Wohldman P."/>
        </authorList>
    </citation>
    <scope>NUCLEOTIDE SEQUENCE [LARGE SCALE GENOMIC DNA]</scope>
    <source>
        <strain>Bristol N2</strain>
    </source>
</reference>
<reference key="2">
    <citation type="journal article" date="1998" name="Science">
        <title>Genome sequence of the nematode C. elegans: a platform for investigating biology.</title>
        <authorList>
            <consortium name="The C. elegans sequencing consortium"/>
        </authorList>
    </citation>
    <scope>NUCLEOTIDE SEQUENCE [LARGE SCALE GENOMIC DNA]</scope>
    <source>
        <strain>Bristol N2</strain>
    </source>
</reference>
<gene>
    <name evidence="1" type="primary">let-754</name>
    <name type="ORF">C29E4.8</name>
</gene>
<proteinExistence type="inferred from homology"/>